<dbReference type="EC" id="2.5.1.-" evidence="1"/>
<dbReference type="EMBL" id="AE017355">
    <property type="protein sequence ID" value="AAT59669.1"/>
    <property type="molecule type" value="Genomic_DNA"/>
</dbReference>
<dbReference type="RefSeq" id="WP_000911687.1">
    <property type="nucleotide sequence ID" value="NC_005957.1"/>
</dbReference>
<dbReference type="RefSeq" id="YP_036189.1">
    <property type="nucleotide sequence ID" value="NC_005957.1"/>
</dbReference>
<dbReference type="SMR" id="Q6HJT7"/>
<dbReference type="KEGG" id="btk:BT9727_1857"/>
<dbReference type="PATRIC" id="fig|281309.8.peg.1956"/>
<dbReference type="HOGENOM" id="CLU_121356_0_0_9"/>
<dbReference type="Proteomes" id="UP000001301">
    <property type="component" value="Chromosome"/>
</dbReference>
<dbReference type="GO" id="GO:0005737">
    <property type="term" value="C:cytoplasm"/>
    <property type="evidence" value="ECO:0007669"/>
    <property type="project" value="UniProtKB-SubCell"/>
</dbReference>
<dbReference type="GO" id="GO:0000287">
    <property type="term" value="F:magnesium ion binding"/>
    <property type="evidence" value="ECO:0007669"/>
    <property type="project" value="UniProtKB-UniRule"/>
</dbReference>
<dbReference type="GO" id="GO:0016765">
    <property type="term" value="F:transferase activity, transferring alkyl or aryl (other than methyl) groups"/>
    <property type="evidence" value="ECO:0007669"/>
    <property type="project" value="UniProtKB-UniRule"/>
</dbReference>
<dbReference type="GO" id="GO:0046677">
    <property type="term" value="P:response to antibiotic"/>
    <property type="evidence" value="ECO:0007669"/>
    <property type="project" value="UniProtKB-UniRule"/>
</dbReference>
<dbReference type="FunFam" id="3.10.180.10:FF:000015">
    <property type="entry name" value="Metallothiol transferase FosB"/>
    <property type="match status" value="1"/>
</dbReference>
<dbReference type="Gene3D" id="3.10.180.10">
    <property type="entry name" value="2,3-Dihydroxybiphenyl 1,2-Dioxygenase, domain 1"/>
    <property type="match status" value="1"/>
</dbReference>
<dbReference type="HAMAP" id="MF_01512">
    <property type="entry name" value="FosB"/>
    <property type="match status" value="1"/>
</dbReference>
<dbReference type="InterPro" id="IPR051332">
    <property type="entry name" value="Fosfomycin_Res_Enzymes"/>
</dbReference>
<dbReference type="InterPro" id="IPR029068">
    <property type="entry name" value="Glyas_Bleomycin-R_OHBP_Dase"/>
</dbReference>
<dbReference type="InterPro" id="IPR004360">
    <property type="entry name" value="Glyas_Fos-R_dOase_dom"/>
</dbReference>
<dbReference type="InterPro" id="IPR022858">
    <property type="entry name" value="Metallothiol_Trafse_FosB"/>
</dbReference>
<dbReference type="InterPro" id="IPR037523">
    <property type="entry name" value="VOC"/>
</dbReference>
<dbReference type="NCBIfam" id="NF000493">
    <property type="entry name" value="Fos_BSH"/>
    <property type="match status" value="1"/>
</dbReference>
<dbReference type="NCBIfam" id="NF041541">
    <property type="entry name" value="fosBx1_fam"/>
    <property type="match status" value="1"/>
</dbReference>
<dbReference type="NCBIfam" id="NF003152">
    <property type="entry name" value="PRK04101.1"/>
    <property type="match status" value="1"/>
</dbReference>
<dbReference type="PANTHER" id="PTHR36113:SF6">
    <property type="entry name" value="FOSFOMYCIN RESISTANCE PROTEIN FOSX"/>
    <property type="match status" value="1"/>
</dbReference>
<dbReference type="PANTHER" id="PTHR36113">
    <property type="entry name" value="LYASE, PUTATIVE-RELATED-RELATED"/>
    <property type="match status" value="1"/>
</dbReference>
<dbReference type="Pfam" id="PF00903">
    <property type="entry name" value="Glyoxalase"/>
    <property type="match status" value="1"/>
</dbReference>
<dbReference type="SUPFAM" id="SSF54593">
    <property type="entry name" value="Glyoxalase/Bleomycin resistance protein/Dihydroxybiphenyl dioxygenase"/>
    <property type="match status" value="1"/>
</dbReference>
<dbReference type="PROSITE" id="PS51819">
    <property type="entry name" value="VOC"/>
    <property type="match status" value="1"/>
</dbReference>
<sequence length="138" mass="16462">MLKGINHLCFSVSNLEDSITFYEKVLEGELLVKGRKLAYFNICGVWIALNEEIHIPRNEIHQSYTHIAFSVEQKDFERLLQRLEENDVHILQGRERDVRDCESIYIVDPDGHKFEFHSGTLQERLNYYREDKPHMTFY</sequence>
<accession>Q6HJT7</accession>
<proteinExistence type="inferred from homology"/>
<protein>
    <recommendedName>
        <fullName evidence="1">Metallothiol transferase FosB</fullName>
        <ecNumber evidence="1">2.5.1.-</ecNumber>
    </recommendedName>
    <alternativeName>
        <fullName evidence="1">Fosfomycin resistance protein</fullName>
    </alternativeName>
</protein>
<organism>
    <name type="scientific">Bacillus thuringiensis subsp. konkukian (strain 97-27)</name>
    <dbReference type="NCBI Taxonomy" id="281309"/>
    <lineage>
        <taxon>Bacteria</taxon>
        <taxon>Bacillati</taxon>
        <taxon>Bacillota</taxon>
        <taxon>Bacilli</taxon>
        <taxon>Bacillales</taxon>
        <taxon>Bacillaceae</taxon>
        <taxon>Bacillus</taxon>
        <taxon>Bacillus cereus group</taxon>
    </lineage>
</organism>
<gene>
    <name evidence="1" type="primary">fosB</name>
    <name type="ordered locus">BT9727_1857</name>
</gene>
<reference key="1">
    <citation type="journal article" date="2006" name="J. Bacteriol.">
        <title>Pathogenomic sequence analysis of Bacillus cereus and Bacillus thuringiensis isolates closely related to Bacillus anthracis.</title>
        <authorList>
            <person name="Han C.S."/>
            <person name="Xie G."/>
            <person name="Challacombe J.F."/>
            <person name="Altherr M.R."/>
            <person name="Bhotika S.S."/>
            <person name="Bruce D."/>
            <person name="Campbell C.S."/>
            <person name="Campbell M.L."/>
            <person name="Chen J."/>
            <person name="Chertkov O."/>
            <person name="Cleland C."/>
            <person name="Dimitrijevic M."/>
            <person name="Doggett N.A."/>
            <person name="Fawcett J.J."/>
            <person name="Glavina T."/>
            <person name="Goodwin L.A."/>
            <person name="Hill K.K."/>
            <person name="Hitchcock P."/>
            <person name="Jackson P.J."/>
            <person name="Keim P."/>
            <person name="Kewalramani A.R."/>
            <person name="Longmire J."/>
            <person name="Lucas S."/>
            <person name="Malfatti S."/>
            <person name="McMurry K."/>
            <person name="Meincke L.J."/>
            <person name="Misra M."/>
            <person name="Moseman B.L."/>
            <person name="Mundt M."/>
            <person name="Munk A.C."/>
            <person name="Okinaka R.T."/>
            <person name="Parson-Quintana B."/>
            <person name="Reilly L.P."/>
            <person name="Richardson P."/>
            <person name="Robinson D.L."/>
            <person name="Rubin E."/>
            <person name="Saunders E."/>
            <person name="Tapia R."/>
            <person name="Tesmer J.G."/>
            <person name="Thayer N."/>
            <person name="Thompson L.S."/>
            <person name="Tice H."/>
            <person name="Ticknor L.O."/>
            <person name="Wills P.L."/>
            <person name="Brettin T.S."/>
            <person name="Gilna P."/>
        </authorList>
    </citation>
    <scope>NUCLEOTIDE SEQUENCE [LARGE SCALE GENOMIC DNA]</scope>
    <source>
        <strain>97-27</strain>
    </source>
</reference>
<feature type="chain" id="PRO_0000164029" description="Metallothiol transferase FosB">
    <location>
        <begin position="1"/>
        <end position="138"/>
    </location>
</feature>
<feature type="domain" description="VOC" evidence="2">
    <location>
        <begin position="4"/>
        <end position="119"/>
    </location>
</feature>
<feature type="active site" description="Proton donor/acceptor" evidence="2">
    <location>
        <position position="115"/>
    </location>
</feature>
<feature type="binding site" evidence="1">
    <location>
        <position position="7"/>
    </location>
    <ligand>
        <name>Mg(2+)</name>
        <dbReference type="ChEBI" id="CHEBI:18420"/>
    </ligand>
</feature>
<feature type="binding site" evidence="1">
    <location>
        <position position="66"/>
    </location>
    <ligand>
        <name>Mg(2+)</name>
        <dbReference type="ChEBI" id="CHEBI:18420"/>
    </ligand>
</feature>
<feature type="binding site" evidence="1">
    <location>
        <position position="115"/>
    </location>
    <ligand>
        <name>Mg(2+)</name>
        <dbReference type="ChEBI" id="CHEBI:18420"/>
    </ligand>
</feature>
<name>FOSB_BACHK</name>
<evidence type="ECO:0000255" key="1">
    <source>
        <dbReference type="HAMAP-Rule" id="MF_01512"/>
    </source>
</evidence>
<evidence type="ECO:0000255" key="2">
    <source>
        <dbReference type="PROSITE-ProRule" id="PRU01163"/>
    </source>
</evidence>
<comment type="function">
    <text evidence="1">Metallothiol transferase which confers resistance to fosfomycin by catalyzing the addition of a thiol cofactor to fosfomycin. L-cysteine is probably the physiological thiol donor.</text>
</comment>
<comment type="cofactor">
    <cofactor evidence="1">
        <name>Mg(2+)</name>
        <dbReference type="ChEBI" id="CHEBI:18420"/>
    </cofactor>
</comment>
<comment type="subunit">
    <text evidence="1">Homodimer.</text>
</comment>
<comment type="subcellular location">
    <subcellularLocation>
        <location evidence="1">Cytoplasm</location>
    </subcellularLocation>
</comment>
<comment type="similarity">
    <text evidence="1">Belongs to the fosfomycin resistance protein family. FosB subfamily.</text>
</comment>
<keyword id="KW-0046">Antibiotic resistance</keyword>
<keyword id="KW-0963">Cytoplasm</keyword>
<keyword id="KW-0460">Magnesium</keyword>
<keyword id="KW-0479">Metal-binding</keyword>
<keyword id="KW-0808">Transferase</keyword>